<protein>
    <recommendedName>
        <fullName evidence="1">Allantoinase</fullName>
        <ecNumber evidence="1">3.5.2.5</ecNumber>
    </recommendedName>
    <alternativeName>
        <fullName evidence="1">Allantoin-utilizing enzyme</fullName>
    </alternativeName>
</protein>
<reference key="1">
    <citation type="journal article" date="2007" name="J. Bacteriol.">
        <title>The genome sequence of avian pathogenic Escherichia coli strain O1:K1:H7 shares strong similarities with human extraintestinal pathogenic E. coli genomes.</title>
        <authorList>
            <person name="Johnson T.J."/>
            <person name="Kariyawasam S."/>
            <person name="Wannemuehler Y."/>
            <person name="Mangiamele P."/>
            <person name="Johnson S.J."/>
            <person name="Doetkott C."/>
            <person name="Skyberg J.A."/>
            <person name="Lynne A.M."/>
            <person name="Johnson J.R."/>
            <person name="Nolan L.K."/>
        </authorList>
    </citation>
    <scope>NUCLEOTIDE SEQUENCE [LARGE SCALE GENOMIC DNA]</scope>
</reference>
<evidence type="ECO:0000255" key="1">
    <source>
        <dbReference type="HAMAP-Rule" id="MF_01645"/>
    </source>
</evidence>
<proteinExistence type="inferred from homology"/>
<organism>
    <name type="scientific">Escherichia coli O1:K1 / APEC</name>
    <dbReference type="NCBI Taxonomy" id="405955"/>
    <lineage>
        <taxon>Bacteria</taxon>
        <taxon>Pseudomonadati</taxon>
        <taxon>Pseudomonadota</taxon>
        <taxon>Gammaproteobacteria</taxon>
        <taxon>Enterobacterales</taxon>
        <taxon>Enterobacteriaceae</taxon>
        <taxon>Escherichia</taxon>
    </lineage>
</organism>
<accession>A1A8H7</accession>
<feature type="chain" id="PRO_0000317677" description="Allantoinase">
    <location>
        <begin position="1"/>
        <end position="453"/>
    </location>
</feature>
<feature type="binding site" evidence="1">
    <location>
        <position position="59"/>
    </location>
    <ligand>
        <name>Zn(2+)</name>
        <dbReference type="ChEBI" id="CHEBI:29105"/>
        <label>1</label>
    </ligand>
</feature>
<feature type="binding site" evidence="1">
    <location>
        <position position="61"/>
    </location>
    <ligand>
        <name>Zn(2+)</name>
        <dbReference type="ChEBI" id="CHEBI:29105"/>
        <label>1</label>
    </ligand>
</feature>
<feature type="binding site" description="via carbamate group" evidence="1">
    <location>
        <position position="146"/>
    </location>
    <ligand>
        <name>Zn(2+)</name>
        <dbReference type="ChEBI" id="CHEBI:29105"/>
        <label>1</label>
    </ligand>
</feature>
<feature type="binding site" description="via carbamate group" evidence="1">
    <location>
        <position position="146"/>
    </location>
    <ligand>
        <name>Zn(2+)</name>
        <dbReference type="ChEBI" id="CHEBI:29105"/>
        <label>2</label>
    </ligand>
</feature>
<feature type="binding site" evidence="1">
    <location>
        <position position="186"/>
    </location>
    <ligand>
        <name>Zn(2+)</name>
        <dbReference type="ChEBI" id="CHEBI:29105"/>
        <label>2</label>
    </ligand>
</feature>
<feature type="binding site" evidence="1">
    <location>
        <position position="242"/>
    </location>
    <ligand>
        <name>Zn(2+)</name>
        <dbReference type="ChEBI" id="CHEBI:29105"/>
        <label>2</label>
    </ligand>
</feature>
<feature type="binding site" evidence="1">
    <location>
        <position position="315"/>
    </location>
    <ligand>
        <name>Zn(2+)</name>
        <dbReference type="ChEBI" id="CHEBI:29105"/>
        <label>1</label>
    </ligand>
</feature>
<feature type="modified residue" description="N6-carboxylysine" evidence="1">
    <location>
        <position position="146"/>
    </location>
</feature>
<sequence>MSFDLIIKNGTVILENEARVVDIAVKDGKIAAIGQDLGDAKDVMDASGLVVSPGMVDAHTHISEPGRSHWEGYETGTRAAAKGGITTMIEMPLNQLPATVDRASIELKFDAAKGKLTIDAAQLGGLVSYNIDRLHELDEVGVVGFKCFVATCGDRGIDNDFRDVNDWQFFKGAQKLGELGQPVLVHCENALICDALGEEAKREGRVTAHDYVASRPVFTEVEAIRRVLYLAKVAGCRLHVCHVSSPEGVEEVTRARQEGQDVTCESCPHYFVLDTDQFEEIGTLAKCSPPIRDLENQKGMWEKLFNGEIDCLVSDHSPCPPEMKAGNIMKAWGGIAGLQSCMDVMFDEAVQKRGMSLPMFGKLMATNAADIFGLQQKGRIAPGKDADFVFIQPNSSYVLTNDDLEYRHKVSPYVGRTIGARITKTILRGDVIYDIEQGFPVAPKGQFILKHQQ</sequence>
<keyword id="KW-0378">Hydrolase</keyword>
<keyword id="KW-0479">Metal-binding</keyword>
<keyword id="KW-0659">Purine metabolism</keyword>
<keyword id="KW-1185">Reference proteome</keyword>
<keyword id="KW-0862">Zinc</keyword>
<gene>
    <name evidence="1" type="primary">allB</name>
    <name type="ordered locus">Ecok1_04730</name>
    <name type="ORF">APECO1_1503</name>
</gene>
<name>ALLB_ECOK1</name>
<dbReference type="EC" id="3.5.2.5" evidence="1"/>
<dbReference type="EMBL" id="CP000468">
    <property type="protein sequence ID" value="ABI99966.1"/>
    <property type="molecule type" value="Genomic_DNA"/>
</dbReference>
<dbReference type="RefSeq" id="WP_000006873.1">
    <property type="nucleotide sequence ID" value="NZ_CADILS010000009.1"/>
</dbReference>
<dbReference type="SMR" id="A1A8H7"/>
<dbReference type="KEGG" id="ecv:APECO1_1503"/>
<dbReference type="HOGENOM" id="CLU_015572_4_2_6"/>
<dbReference type="UniPathway" id="UPA00395">
    <property type="reaction ID" value="UER00653"/>
</dbReference>
<dbReference type="Proteomes" id="UP000008216">
    <property type="component" value="Chromosome"/>
</dbReference>
<dbReference type="GO" id="GO:0005737">
    <property type="term" value="C:cytoplasm"/>
    <property type="evidence" value="ECO:0007669"/>
    <property type="project" value="TreeGrafter"/>
</dbReference>
<dbReference type="GO" id="GO:0004038">
    <property type="term" value="F:allantoinase activity"/>
    <property type="evidence" value="ECO:0007669"/>
    <property type="project" value="UniProtKB-UniRule"/>
</dbReference>
<dbReference type="GO" id="GO:0050897">
    <property type="term" value="F:cobalt ion binding"/>
    <property type="evidence" value="ECO:0007669"/>
    <property type="project" value="InterPro"/>
</dbReference>
<dbReference type="GO" id="GO:0008270">
    <property type="term" value="F:zinc ion binding"/>
    <property type="evidence" value="ECO:0007669"/>
    <property type="project" value="InterPro"/>
</dbReference>
<dbReference type="GO" id="GO:0000256">
    <property type="term" value="P:allantoin catabolic process"/>
    <property type="evidence" value="ECO:0007669"/>
    <property type="project" value="UniProtKB-UniRule"/>
</dbReference>
<dbReference type="GO" id="GO:0006145">
    <property type="term" value="P:purine nucleobase catabolic process"/>
    <property type="evidence" value="ECO:0007669"/>
    <property type="project" value="TreeGrafter"/>
</dbReference>
<dbReference type="CDD" id="cd01315">
    <property type="entry name" value="L-HYD_ALN"/>
    <property type="match status" value="1"/>
</dbReference>
<dbReference type="FunFam" id="3.20.20.140:FF:000013">
    <property type="entry name" value="Allantoinase"/>
    <property type="match status" value="1"/>
</dbReference>
<dbReference type="Gene3D" id="3.20.20.140">
    <property type="entry name" value="Metal-dependent hydrolases"/>
    <property type="match status" value="1"/>
</dbReference>
<dbReference type="Gene3D" id="2.30.40.10">
    <property type="entry name" value="Urease, subunit C, domain 1"/>
    <property type="match status" value="1"/>
</dbReference>
<dbReference type="HAMAP" id="MF_01645">
    <property type="entry name" value="Hydantoinase"/>
    <property type="match status" value="1"/>
</dbReference>
<dbReference type="InterPro" id="IPR017593">
    <property type="entry name" value="Allantoinase"/>
</dbReference>
<dbReference type="InterPro" id="IPR047604">
    <property type="entry name" value="Allantoinase_bact"/>
</dbReference>
<dbReference type="InterPro" id="IPR006680">
    <property type="entry name" value="Amidohydro-rel"/>
</dbReference>
<dbReference type="InterPro" id="IPR050138">
    <property type="entry name" value="DHOase/Allantoinase_Hydrolase"/>
</dbReference>
<dbReference type="InterPro" id="IPR011059">
    <property type="entry name" value="Metal-dep_hydrolase_composite"/>
</dbReference>
<dbReference type="InterPro" id="IPR032466">
    <property type="entry name" value="Metal_Hydrolase"/>
</dbReference>
<dbReference type="NCBIfam" id="TIGR03178">
    <property type="entry name" value="allantoinase"/>
    <property type="match status" value="1"/>
</dbReference>
<dbReference type="NCBIfam" id="NF005960">
    <property type="entry name" value="PRK08044.1"/>
    <property type="match status" value="1"/>
</dbReference>
<dbReference type="PANTHER" id="PTHR43668">
    <property type="entry name" value="ALLANTOINASE"/>
    <property type="match status" value="1"/>
</dbReference>
<dbReference type="PANTHER" id="PTHR43668:SF4">
    <property type="entry name" value="ALLANTOINASE"/>
    <property type="match status" value="1"/>
</dbReference>
<dbReference type="Pfam" id="PF01979">
    <property type="entry name" value="Amidohydro_1"/>
    <property type="match status" value="1"/>
</dbReference>
<dbReference type="SUPFAM" id="SSF51338">
    <property type="entry name" value="Composite domain of metallo-dependent hydrolases"/>
    <property type="match status" value="1"/>
</dbReference>
<dbReference type="SUPFAM" id="SSF51556">
    <property type="entry name" value="Metallo-dependent hydrolases"/>
    <property type="match status" value="1"/>
</dbReference>
<comment type="function">
    <text evidence="1">Catalyzes the conversion of allantoin (5-ureidohydantoin) to allantoic acid by hydrolytic cleavage of the five-member hydantoin ring.</text>
</comment>
<comment type="catalytic activity">
    <reaction evidence="1">
        <text>(S)-allantoin + H2O = allantoate + H(+)</text>
        <dbReference type="Rhea" id="RHEA:17029"/>
        <dbReference type="ChEBI" id="CHEBI:15377"/>
        <dbReference type="ChEBI" id="CHEBI:15378"/>
        <dbReference type="ChEBI" id="CHEBI:15678"/>
        <dbReference type="ChEBI" id="CHEBI:17536"/>
        <dbReference type="EC" id="3.5.2.5"/>
    </reaction>
</comment>
<comment type="cofactor">
    <cofactor evidence="1">
        <name>Zn(2+)</name>
        <dbReference type="ChEBI" id="CHEBI:29105"/>
    </cofactor>
    <text evidence="1">Binds 2 Zn(2+) ions per subunit.</text>
</comment>
<comment type="pathway">
    <text evidence="1">Nitrogen metabolism; (S)-allantoin degradation; allantoate from (S)-allantoin: step 1/1.</text>
</comment>
<comment type="subunit">
    <text evidence="1">Homotetramer.</text>
</comment>
<comment type="PTM">
    <text evidence="1">Carboxylation allows a single lysine to coordinate two zinc ions.</text>
</comment>
<comment type="similarity">
    <text evidence="1">Belongs to the metallo-dependent hydrolases superfamily. Allantoinase family.</text>
</comment>